<organism>
    <name type="scientific">Arabidopsis thaliana</name>
    <name type="common">Mouse-ear cress</name>
    <dbReference type="NCBI Taxonomy" id="3702"/>
    <lineage>
        <taxon>Eukaryota</taxon>
        <taxon>Viridiplantae</taxon>
        <taxon>Streptophyta</taxon>
        <taxon>Embryophyta</taxon>
        <taxon>Tracheophyta</taxon>
        <taxon>Spermatophyta</taxon>
        <taxon>Magnoliopsida</taxon>
        <taxon>eudicotyledons</taxon>
        <taxon>Gunneridae</taxon>
        <taxon>Pentapetalae</taxon>
        <taxon>rosids</taxon>
        <taxon>malvids</taxon>
        <taxon>Brassicales</taxon>
        <taxon>Brassicaceae</taxon>
        <taxon>Camelineae</taxon>
        <taxon>Arabidopsis</taxon>
    </lineage>
</organism>
<keyword id="KW-1185">Reference proteome</keyword>
<keyword id="KW-0677">Repeat</keyword>
<protein>
    <recommendedName>
        <fullName>Pentatricopeptide repeat-containing protein At5g61800</fullName>
    </recommendedName>
</protein>
<reference key="1">
    <citation type="journal article" date="1998" name="DNA Res.">
        <title>Structural analysis of Arabidopsis thaliana chromosome 5. IV. Sequence features of the regions of 1,456,315 bp covered by nineteen physically assigned P1 and TAC clones.</title>
        <authorList>
            <person name="Sato S."/>
            <person name="Kaneko T."/>
            <person name="Kotani H."/>
            <person name="Nakamura Y."/>
            <person name="Asamizu E."/>
            <person name="Miyajima N."/>
            <person name="Tabata S."/>
        </authorList>
    </citation>
    <scope>NUCLEOTIDE SEQUENCE [LARGE SCALE GENOMIC DNA]</scope>
    <source>
        <strain>cv. Columbia</strain>
    </source>
</reference>
<reference key="2">
    <citation type="journal article" date="2017" name="Plant J.">
        <title>Araport11: a complete reannotation of the Arabidopsis thaliana reference genome.</title>
        <authorList>
            <person name="Cheng C.Y."/>
            <person name="Krishnakumar V."/>
            <person name="Chan A.P."/>
            <person name="Thibaud-Nissen F."/>
            <person name="Schobel S."/>
            <person name="Town C.D."/>
        </authorList>
    </citation>
    <scope>GENOME REANNOTATION</scope>
    <source>
        <strain>cv. Columbia</strain>
    </source>
</reference>
<reference key="3">
    <citation type="journal article" date="2000" name="Plant Mol. Biol.">
        <title>In Arabidopsis thaliana, 1% of the genome codes for a novel protein family unique to plants.</title>
        <authorList>
            <person name="Aubourg S."/>
            <person name="Boudet N."/>
            <person name="Kreis M."/>
            <person name="Lecharny A."/>
        </authorList>
    </citation>
    <scope>GENE FAMILY</scope>
</reference>
<reference key="4">
    <citation type="journal article" date="2004" name="Plant Cell">
        <title>Genome-wide analysis of Arabidopsis pentatricopeptide repeat proteins reveals their essential role in organelle biogenesis.</title>
        <authorList>
            <person name="Lurin C."/>
            <person name="Andres C."/>
            <person name="Aubourg S."/>
            <person name="Bellaoui M."/>
            <person name="Bitton F."/>
            <person name="Bruyere C."/>
            <person name="Caboche M."/>
            <person name="Debast C."/>
            <person name="Gualberto J."/>
            <person name="Hoffmann B."/>
            <person name="Lecharny A."/>
            <person name="Le Ret M."/>
            <person name="Martin-Magniette M.-L."/>
            <person name="Mireau H."/>
            <person name="Peeters N."/>
            <person name="Renou J.-P."/>
            <person name="Szurek B."/>
            <person name="Taconnat L."/>
            <person name="Small I."/>
        </authorList>
    </citation>
    <scope>GENE FAMILY</scope>
</reference>
<dbReference type="EMBL" id="AB010069">
    <property type="protein sequence ID" value="BAB10080.1"/>
    <property type="molecule type" value="Genomic_DNA"/>
</dbReference>
<dbReference type="EMBL" id="CP002688">
    <property type="protein sequence ID" value="AED97519.1"/>
    <property type="molecule type" value="Genomic_DNA"/>
</dbReference>
<dbReference type="RefSeq" id="NP_200988.1">
    <property type="nucleotide sequence ID" value="NM_125574.3"/>
</dbReference>
<dbReference type="SMR" id="Q9FLS9"/>
<dbReference type="FunCoup" id="Q9FLS9">
    <property type="interactions" value="178"/>
</dbReference>
<dbReference type="PaxDb" id="3702-AT5G61800.1"/>
<dbReference type="EnsemblPlants" id="AT5G61800.1">
    <property type="protein sequence ID" value="AT5G61800.1"/>
    <property type="gene ID" value="AT5G61800"/>
</dbReference>
<dbReference type="GeneID" id="836302"/>
<dbReference type="Gramene" id="AT5G61800.1">
    <property type="protein sequence ID" value="AT5G61800.1"/>
    <property type="gene ID" value="AT5G61800"/>
</dbReference>
<dbReference type="KEGG" id="ath:AT5G61800"/>
<dbReference type="Araport" id="AT5G61800"/>
<dbReference type="TAIR" id="AT5G61800"/>
<dbReference type="eggNOG" id="KOG4197">
    <property type="taxonomic scope" value="Eukaryota"/>
</dbReference>
<dbReference type="HOGENOM" id="CLU_002706_0_6_1"/>
<dbReference type="InParanoid" id="Q9FLS9"/>
<dbReference type="OMA" id="MIEAMPM"/>
<dbReference type="PhylomeDB" id="Q9FLS9"/>
<dbReference type="PRO" id="PR:Q9FLS9"/>
<dbReference type="Proteomes" id="UP000006548">
    <property type="component" value="Chromosome 5"/>
</dbReference>
<dbReference type="ExpressionAtlas" id="Q9FLS9">
    <property type="expression patterns" value="baseline and differential"/>
</dbReference>
<dbReference type="GO" id="GO:0003723">
    <property type="term" value="F:RNA binding"/>
    <property type="evidence" value="ECO:0007669"/>
    <property type="project" value="InterPro"/>
</dbReference>
<dbReference type="GO" id="GO:0009451">
    <property type="term" value="P:RNA modification"/>
    <property type="evidence" value="ECO:0007669"/>
    <property type="project" value="InterPro"/>
</dbReference>
<dbReference type="FunFam" id="1.25.40.10:FF:001156">
    <property type="entry name" value="Pentatricopeptide repeat-containing protein At5g61800"/>
    <property type="match status" value="1"/>
</dbReference>
<dbReference type="FunFam" id="1.25.40.10:FF:001679">
    <property type="entry name" value="Pentatricopeptide repeat-containing protein At5g61800"/>
    <property type="match status" value="1"/>
</dbReference>
<dbReference type="FunFam" id="1.25.40.10:FF:000090">
    <property type="entry name" value="Pentatricopeptide repeat-containing protein, chloroplastic"/>
    <property type="match status" value="1"/>
</dbReference>
<dbReference type="Gene3D" id="1.25.40.10">
    <property type="entry name" value="Tetratricopeptide repeat domain"/>
    <property type="match status" value="4"/>
</dbReference>
<dbReference type="InterPro" id="IPR046848">
    <property type="entry name" value="E_motif"/>
</dbReference>
<dbReference type="InterPro" id="IPR002885">
    <property type="entry name" value="Pentatricopeptide_rpt"/>
</dbReference>
<dbReference type="InterPro" id="IPR046960">
    <property type="entry name" value="PPR_At4g14850-like_plant"/>
</dbReference>
<dbReference type="InterPro" id="IPR011990">
    <property type="entry name" value="TPR-like_helical_dom_sf"/>
</dbReference>
<dbReference type="NCBIfam" id="TIGR00756">
    <property type="entry name" value="PPR"/>
    <property type="match status" value="4"/>
</dbReference>
<dbReference type="PANTHER" id="PTHR47926">
    <property type="entry name" value="PENTATRICOPEPTIDE REPEAT-CONTAINING PROTEIN"/>
    <property type="match status" value="1"/>
</dbReference>
<dbReference type="PANTHER" id="PTHR47926:SF436">
    <property type="entry name" value="PENTATRICOPEPTIDE REPEAT-CONTAINING PROTEIN ELI1, CHLOROPLASTIC-LIKE ISOFORM X2"/>
    <property type="match status" value="1"/>
</dbReference>
<dbReference type="Pfam" id="PF20431">
    <property type="entry name" value="E_motif"/>
    <property type="match status" value="1"/>
</dbReference>
<dbReference type="Pfam" id="PF01535">
    <property type="entry name" value="PPR"/>
    <property type="match status" value="2"/>
</dbReference>
<dbReference type="Pfam" id="PF12854">
    <property type="entry name" value="PPR_1"/>
    <property type="match status" value="1"/>
</dbReference>
<dbReference type="Pfam" id="PF13041">
    <property type="entry name" value="PPR_2"/>
    <property type="match status" value="2"/>
</dbReference>
<dbReference type="SUPFAM" id="SSF48452">
    <property type="entry name" value="TPR-like"/>
    <property type="match status" value="1"/>
</dbReference>
<dbReference type="PROSITE" id="PS51375">
    <property type="entry name" value="PPR"/>
    <property type="match status" value="11"/>
</dbReference>
<sequence>MINYSSCSYLLKLCRTLKHLHQFHAQFITSGRISNDFKQNSVFANVLFAITSISPSASASKEVVSYATSVFRFITNPSTFCFNTIIRICTLHEPSSLSSKRFFVEMRRRSVPPDFHTFPFVFKACAAKKNGDLTLVKTLHCQALRFGLLSDLFTLNTLIRVYSLIAPIDSALQLFDENPQRDVVTYNVLIDGLVKAREIVRARELFDSMPLRDLVSWNSLISGYAQMNHCREAIKLFDEMVALGLKPDNVAIVSTLSACAQSGDWQKGKAIHDYTKRKRLFIDSFLATGLVDFYAKCGFIDTAMEIFELCSDKTLFTWNAMITGLAMHGNGELTVDYFRKMVSSGIKPDGVTFISVLVGCSHSGLVDEARNLFDQMRSLYDVNREMKHYGCMADLLGRAGLIEEAAEMIEQMPKDGGNREKLLAWSGLLGGCRIHGNIEIAEKAANRVKALSPEDGGVYKVMVEMYANAERWEEVVKVREIIDRDKKVKKNVGFSKVLS</sequence>
<name>PP441_ARATH</name>
<gene>
    <name type="primary">PCMP-E8</name>
    <name type="ordered locus">At5g61800</name>
    <name type="ORF">MAC9.12</name>
</gene>
<comment type="similarity">
    <text evidence="1">Belongs to the PPR family. PCMP-E subfamily.</text>
</comment>
<comment type="online information" name="Pentatricopeptide repeat proteins">
    <link uri="https://ppr.plantenergy.uwa.edu.au"/>
</comment>
<feature type="chain" id="PRO_0000363578" description="Pentatricopeptide repeat-containing protein At5g61800">
    <location>
        <begin position="1"/>
        <end position="499"/>
    </location>
</feature>
<feature type="repeat" description="PPR 1">
    <location>
        <begin position="78"/>
        <end position="113"/>
    </location>
</feature>
<feature type="repeat" description="PPR 2">
    <location>
        <begin position="114"/>
        <end position="150"/>
    </location>
</feature>
<feature type="repeat" description="PPR 3">
    <location>
        <begin position="151"/>
        <end position="181"/>
    </location>
</feature>
<feature type="repeat" description="PPR 4">
    <location>
        <begin position="182"/>
        <end position="212"/>
    </location>
</feature>
<feature type="repeat" description="PPR 5">
    <location>
        <begin position="213"/>
        <end position="247"/>
    </location>
</feature>
<feature type="repeat" description="PPR 6">
    <location>
        <begin position="248"/>
        <end position="282"/>
    </location>
</feature>
<feature type="repeat" description="PPR 7">
    <location>
        <begin position="283"/>
        <end position="313"/>
    </location>
</feature>
<feature type="repeat" description="PPR 8">
    <location>
        <begin position="314"/>
        <end position="348"/>
    </location>
</feature>
<feature type="repeat" description="PPR 9">
    <location>
        <begin position="349"/>
        <end position="379"/>
    </location>
</feature>
<feature type="repeat" description="PPR 10">
    <location>
        <begin position="385"/>
        <end position="419"/>
    </location>
</feature>
<feature type="region of interest" description="Type E motif">
    <location>
        <begin position="424"/>
        <end position="499"/>
    </location>
</feature>
<accession>Q9FLS9</accession>
<proteinExistence type="evidence at transcript level"/>
<evidence type="ECO:0000305" key="1"/>